<evidence type="ECO:0000255" key="1">
    <source>
        <dbReference type="HAMAP-Rule" id="MF_01366"/>
    </source>
</evidence>
<evidence type="ECO:0000305" key="2"/>
<feature type="chain" id="PRO_0000223974" description="Large ribosomal subunit protein uL13">
    <location>
        <begin position="1"/>
        <end position="145"/>
    </location>
</feature>
<proteinExistence type="inferred from homology"/>
<accession>Q5HDZ0</accession>
<sequence length="145" mass="16333">MRQTFMANESNIERKWYVIDAEGQTLGRLSSEVASILRGKNKVTYTPHVDTGDYVIVINASKIEFTGNKETDKVYYRHSNHPGGIKSITAGELRRTNPERLIENSIKGMLPSTRLGEKQGKKLFVYGGAEHPHAAQQPENYELRG</sequence>
<protein>
    <recommendedName>
        <fullName evidence="1">Large ribosomal subunit protein uL13</fullName>
    </recommendedName>
    <alternativeName>
        <fullName evidence="2">50S ribosomal protein L13</fullName>
    </alternativeName>
</protein>
<keyword id="KW-0687">Ribonucleoprotein</keyword>
<keyword id="KW-0689">Ribosomal protein</keyword>
<comment type="function">
    <text evidence="1">This protein is one of the early assembly proteins of the 50S ribosomal subunit, although it is not seen to bind rRNA by itself. It is important during the early stages of 50S assembly.</text>
</comment>
<comment type="subunit">
    <text evidence="1">Part of the 50S ribosomal subunit.</text>
</comment>
<comment type="similarity">
    <text evidence="1">Belongs to the universal ribosomal protein uL13 family.</text>
</comment>
<gene>
    <name evidence="1" type="primary">rplM</name>
    <name type="ordered locus">SACOL2207</name>
</gene>
<dbReference type="EMBL" id="CP000046">
    <property type="protein sequence ID" value="AAW37082.1"/>
    <property type="molecule type" value="Genomic_DNA"/>
</dbReference>
<dbReference type="RefSeq" id="WP_001250038.1">
    <property type="nucleotide sequence ID" value="NZ_JBGOFO010000004.1"/>
</dbReference>
<dbReference type="SMR" id="Q5HDZ0"/>
<dbReference type="GeneID" id="98346530"/>
<dbReference type="KEGG" id="sac:SACOL2207"/>
<dbReference type="HOGENOM" id="CLU_082184_2_2_9"/>
<dbReference type="Proteomes" id="UP000000530">
    <property type="component" value="Chromosome"/>
</dbReference>
<dbReference type="GO" id="GO:0022625">
    <property type="term" value="C:cytosolic large ribosomal subunit"/>
    <property type="evidence" value="ECO:0007669"/>
    <property type="project" value="TreeGrafter"/>
</dbReference>
<dbReference type="GO" id="GO:0003729">
    <property type="term" value="F:mRNA binding"/>
    <property type="evidence" value="ECO:0007669"/>
    <property type="project" value="TreeGrafter"/>
</dbReference>
<dbReference type="GO" id="GO:0003735">
    <property type="term" value="F:structural constituent of ribosome"/>
    <property type="evidence" value="ECO:0007669"/>
    <property type="project" value="InterPro"/>
</dbReference>
<dbReference type="GO" id="GO:0017148">
    <property type="term" value="P:negative regulation of translation"/>
    <property type="evidence" value="ECO:0007669"/>
    <property type="project" value="TreeGrafter"/>
</dbReference>
<dbReference type="GO" id="GO:0006412">
    <property type="term" value="P:translation"/>
    <property type="evidence" value="ECO:0007669"/>
    <property type="project" value="UniProtKB-UniRule"/>
</dbReference>
<dbReference type="CDD" id="cd00392">
    <property type="entry name" value="Ribosomal_L13"/>
    <property type="match status" value="1"/>
</dbReference>
<dbReference type="FunFam" id="3.90.1180.10:FF:000001">
    <property type="entry name" value="50S ribosomal protein L13"/>
    <property type="match status" value="1"/>
</dbReference>
<dbReference type="Gene3D" id="3.90.1180.10">
    <property type="entry name" value="Ribosomal protein L13"/>
    <property type="match status" value="1"/>
</dbReference>
<dbReference type="HAMAP" id="MF_01366">
    <property type="entry name" value="Ribosomal_uL13"/>
    <property type="match status" value="1"/>
</dbReference>
<dbReference type="InterPro" id="IPR005822">
    <property type="entry name" value="Ribosomal_uL13"/>
</dbReference>
<dbReference type="InterPro" id="IPR005823">
    <property type="entry name" value="Ribosomal_uL13_bac-type"/>
</dbReference>
<dbReference type="InterPro" id="IPR023563">
    <property type="entry name" value="Ribosomal_uL13_CS"/>
</dbReference>
<dbReference type="InterPro" id="IPR036899">
    <property type="entry name" value="Ribosomal_uL13_sf"/>
</dbReference>
<dbReference type="NCBIfam" id="TIGR01066">
    <property type="entry name" value="rplM_bact"/>
    <property type="match status" value="1"/>
</dbReference>
<dbReference type="PANTHER" id="PTHR11545:SF2">
    <property type="entry name" value="LARGE RIBOSOMAL SUBUNIT PROTEIN UL13M"/>
    <property type="match status" value="1"/>
</dbReference>
<dbReference type="PANTHER" id="PTHR11545">
    <property type="entry name" value="RIBOSOMAL PROTEIN L13"/>
    <property type="match status" value="1"/>
</dbReference>
<dbReference type="Pfam" id="PF00572">
    <property type="entry name" value="Ribosomal_L13"/>
    <property type="match status" value="1"/>
</dbReference>
<dbReference type="PIRSF" id="PIRSF002181">
    <property type="entry name" value="Ribosomal_L13"/>
    <property type="match status" value="1"/>
</dbReference>
<dbReference type="SUPFAM" id="SSF52161">
    <property type="entry name" value="Ribosomal protein L13"/>
    <property type="match status" value="1"/>
</dbReference>
<dbReference type="PROSITE" id="PS00783">
    <property type="entry name" value="RIBOSOMAL_L13"/>
    <property type="match status" value="1"/>
</dbReference>
<reference key="1">
    <citation type="journal article" date="2005" name="J. Bacteriol.">
        <title>Insights on evolution of virulence and resistance from the complete genome analysis of an early methicillin-resistant Staphylococcus aureus strain and a biofilm-producing methicillin-resistant Staphylococcus epidermidis strain.</title>
        <authorList>
            <person name="Gill S.R."/>
            <person name="Fouts D.E."/>
            <person name="Archer G.L."/>
            <person name="Mongodin E.F."/>
            <person name="DeBoy R.T."/>
            <person name="Ravel J."/>
            <person name="Paulsen I.T."/>
            <person name="Kolonay J.F."/>
            <person name="Brinkac L.M."/>
            <person name="Beanan M.J."/>
            <person name="Dodson R.J."/>
            <person name="Daugherty S.C."/>
            <person name="Madupu R."/>
            <person name="Angiuoli S.V."/>
            <person name="Durkin A.S."/>
            <person name="Haft D.H."/>
            <person name="Vamathevan J.J."/>
            <person name="Khouri H."/>
            <person name="Utterback T.R."/>
            <person name="Lee C."/>
            <person name="Dimitrov G."/>
            <person name="Jiang L."/>
            <person name="Qin H."/>
            <person name="Weidman J."/>
            <person name="Tran K."/>
            <person name="Kang K.H."/>
            <person name="Hance I.R."/>
            <person name="Nelson K.E."/>
            <person name="Fraser C.M."/>
        </authorList>
    </citation>
    <scope>NUCLEOTIDE SEQUENCE [LARGE SCALE GENOMIC DNA]</scope>
    <source>
        <strain>COL</strain>
    </source>
</reference>
<organism>
    <name type="scientific">Staphylococcus aureus (strain COL)</name>
    <dbReference type="NCBI Taxonomy" id="93062"/>
    <lineage>
        <taxon>Bacteria</taxon>
        <taxon>Bacillati</taxon>
        <taxon>Bacillota</taxon>
        <taxon>Bacilli</taxon>
        <taxon>Bacillales</taxon>
        <taxon>Staphylococcaceae</taxon>
        <taxon>Staphylococcus</taxon>
    </lineage>
</organism>
<name>RL13_STAAC</name>